<gene>
    <name evidence="1" type="primary">dapA</name>
    <name type="ordered locus">NMC0907</name>
</gene>
<keyword id="KW-0028">Amino-acid biosynthesis</keyword>
<keyword id="KW-0963">Cytoplasm</keyword>
<keyword id="KW-0220">Diaminopimelate biosynthesis</keyword>
<keyword id="KW-0456">Lyase</keyword>
<keyword id="KW-0457">Lysine biosynthesis</keyword>
<keyword id="KW-0704">Schiff base</keyword>
<name>DAPA_NEIMF</name>
<organism>
    <name type="scientific">Neisseria meningitidis serogroup C / serotype 2a (strain ATCC 700532 / DSM 15464 / FAM18)</name>
    <dbReference type="NCBI Taxonomy" id="272831"/>
    <lineage>
        <taxon>Bacteria</taxon>
        <taxon>Pseudomonadati</taxon>
        <taxon>Pseudomonadota</taxon>
        <taxon>Betaproteobacteria</taxon>
        <taxon>Neisseriales</taxon>
        <taxon>Neisseriaceae</taxon>
        <taxon>Neisseria</taxon>
    </lineage>
</organism>
<reference key="1">
    <citation type="journal article" date="2007" name="PLoS Genet.">
        <title>Meningococcal genetic variation mechanisms viewed through comparative analysis of serogroup C strain FAM18.</title>
        <authorList>
            <person name="Bentley S.D."/>
            <person name="Vernikos G.S."/>
            <person name="Snyder L.A.S."/>
            <person name="Churcher C."/>
            <person name="Arrowsmith C."/>
            <person name="Chillingworth T."/>
            <person name="Cronin A."/>
            <person name="Davis P.H."/>
            <person name="Holroyd N.E."/>
            <person name="Jagels K."/>
            <person name="Maddison M."/>
            <person name="Moule S."/>
            <person name="Rabbinowitsch E."/>
            <person name="Sharp S."/>
            <person name="Unwin L."/>
            <person name="Whitehead S."/>
            <person name="Quail M.A."/>
            <person name="Achtman M."/>
            <person name="Barrell B.G."/>
            <person name="Saunders N.J."/>
            <person name="Parkhill J."/>
        </authorList>
    </citation>
    <scope>NUCLEOTIDE SEQUENCE [LARGE SCALE GENOMIC DNA]</scope>
    <source>
        <strain>ATCC 700532 / DSM 15464 / FAM18</strain>
    </source>
</reference>
<feature type="chain" id="PRO_1000050229" description="4-hydroxy-tetrahydrodipicolinate synthase">
    <location>
        <begin position="1"/>
        <end position="291"/>
    </location>
</feature>
<feature type="active site" description="Proton donor/acceptor" evidence="1">
    <location>
        <position position="133"/>
    </location>
</feature>
<feature type="active site" description="Schiff-base intermediate with substrate" evidence="1">
    <location>
        <position position="161"/>
    </location>
</feature>
<feature type="binding site" evidence="1">
    <location>
        <position position="45"/>
    </location>
    <ligand>
        <name>pyruvate</name>
        <dbReference type="ChEBI" id="CHEBI:15361"/>
    </ligand>
</feature>
<feature type="binding site" evidence="1">
    <location>
        <position position="203"/>
    </location>
    <ligand>
        <name>pyruvate</name>
        <dbReference type="ChEBI" id="CHEBI:15361"/>
    </ligand>
</feature>
<feature type="site" description="Part of a proton relay during catalysis" evidence="1">
    <location>
        <position position="44"/>
    </location>
</feature>
<feature type="site" description="Part of a proton relay during catalysis" evidence="1">
    <location>
        <position position="107"/>
    </location>
</feature>
<sequence length="291" mass="30781">MLQGSLVALITPMNQDGSIHYEQLRDLIDWHIENGTDGIVAVGTTGESATLSVEEHTAVIEAVVKHVAKRVPVIAGTGANNTVEAIALSQAAEKAGADYTLSVVPYYNKPSQEGMYRHFKAVAEAAAIPMILYNVPGRTVVSMTNDTILRLSEIPNIVGVKEASGNVGSNIELINRAPEGFVVLSGDDHTALPFMLCGGHGVITVAANAAPKLFADMCRAALQGDIALARELNDRLIPIYDTMFCEPSPAAPKWAVSALGRCEPHVRLPLVPLTEGGQAKVRAALKASGQL</sequence>
<proteinExistence type="inferred from homology"/>
<dbReference type="EC" id="4.3.3.7" evidence="1"/>
<dbReference type="EMBL" id="AM421808">
    <property type="protein sequence ID" value="CAM10185.1"/>
    <property type="molecule type" value="Genomic_DNA"/>
</dbReference>
<dbReference type="RefSeq" id="WP_002221139.1">
    <property type="nucleotide sequence ID" value="NC_008767.1"/>
</dbReference>
<dbReference type="SMR" id="A1KTJ9"/>
<dbReference type="KEGG" id="nmc:NMC0907"/>
<dbReference type="HOGENOM" id="CLU_049343_7_1_4"/>
<dbReference type="UniPathway" id="UPA00034">
    <property type="reaction ID" value="UER00017"/>
</dbReference>
<dbReference type="Proteomes" id="UP000002286">
    <property type="component" value="Chromosome"/>
</dbReference>
<dbReference type="GO" id="GO:0005829">
    <property type="term" value="C:cytosol"/>
    <property type="evidence" value="ECO:0007669"/>
    <property type="project" value="TreeGrafter"/>
</dbReference>
<dbReference type="GO" id="GO:0008840">
    <property type="term" value="F:4-hydroxy-tetrahydrodipicolinate synthase activity"/>
    <property type="evidence" value="ECO:0007669"/>
    <property type="project" value="UniProtKB-UniRule"/>
</dbReference>
<dbReference type="GO" id="GO:0019877">
    <property type="term" value="P:diaminopimelate biosynthetic process"/>
    <property type="evidence" value="ECO:0007669"/>
    <property type="project" value="UniProtKB-UniRule"/>
</dbReference>
<dbReference type="GO" id="GO:0009089">
    <property type="term" value="P:lysine biosynthetic process via diaminopimelate"/>
    <property type="evidence" value="ECO:0007669"/>
    <property type="project" value="UniProtKB-UniRule"/>
</dbReference>
<dbReference type="CDD" id="cd00950">
    <property type="entry name" value="DHDPS"/>
    <property type="match status" value="1"/>
</dbReference>
<dbReference type="Gene3D" id="3.20.20.70">
    <property type="entry name" value="Aldolase class I"/>
    <property type="match status" value="1"/>
</dbReference>
<dbReference type="HAMAP" id="MF_00418">
    <property type="entry name" value="DapA"/>
    <property type="match status" value="1"/>
</dbReference>
<dbReference type="InterPro" id="IPR013785">
    <property type="entry name" value="Aldolase_TIM"/>
</dbReference>
<dbReference type="InterPro" id="IPR005263">
    <property type="entry name" value="DapA"/>
</dbReference>
<dbReference type="InterPro" id="IPR002220">
    <property type="entry name" value="DapA-like"/>
</dbReference>
<dbReference type="InterPro" id="IPR020625">
    <property type="entry name" value="Schiff_base-form_aldolases_AS"/>
</dbReference>
<dbReference type="InterPro" id="IPR020624">
    <property type="entry name" value="Schiff_base-form_aldolases_CS"/>
</dbReference>
<dbReference type="NCBIfam" id="TIGR00674">
    <property type="entry name" value="dapA"/>
    <property type="match status" value="1"/>
</dbReference>
<dbReference type="PANTHER" id="PTHR12128:SF66">
    <property type="entry name" value="4-HYDROXY-2-OXOGLUTARATE ALDOLASE, MITOCHONDRIAL"/>
    <property type="match status" value="1"/>
</dbReference>
<dbReference type="PANTHER" id="PTHR12128">
    <property type="entry name" value="DIHYDRODIPICOLINATE SYNTHASE"/>
    <property type="match status" value="1"/>
</dbReference>
<dbReference type="Pfam" id="PF00701">
    <property type="entry name" value="DHDPS"/>
    <property type="match status" value="1"/>
</dbReference>
<dbReference type="PIRSF" id="PIRSF001365">
    <property type="entry name" value="DHDPS"/>
    <property type="match status" value="1"/>
</dbReference>
<dbReference type="PRINTS" id="PR00146">
    <property type="entry name" value="DHPICSNTHASE"/>
</dbReference>
<dbReference type="SMART" id="SM01130">
    <property type="entry name" value="DHDPS"/>
    <property type="match status" value="1"/>
</dbReference>
<dbReference type="SUPFAM" id="SSF51569">
    <property type="entry name" value="Aldolase"/>
    <property type="match status" value="1"/>
</dbReference>
<dbReference type="PROSITE" id="PS00665">
    <property type="entry name" value="DHDPS_1"/>
    <property type="match status" value="1"/>
</dbReference>
<dbReference type="PROSITE" id="PS00666">
    <property type="entry name" value="DHDPS_2"/>
    <property type="match status" value="1"/>
</dbReference>
<accession>A1KTJ9</accession>
<comment type="function">
    <text evidence="1">Catalyzes the condensation of (S)-aspartate-beta-semialdehyde [(S)-ASA] and pyruvate to 4-hydroxy-tetrahydrodipicolinate (HTPA).</text>
</comment>
<comment type="catalytic activity">
    <reaction evidence="1">
        <text>L-aspartate 4-semialdehyde + pyruvate = (2S,4S)-4-hydroxy-2,3,4,5-tetrahydrodipicolinate + H2O + H(+)</text>
        <dbReference type="Rhea" id="RHEA:34171"/>
        <dbReference type="ChEBI" id="CHEBI:15361"/>
        <dbReference type="ChEBI" id="CHEBI:15377"/>
        <dbReference type="ChEBI" id="CHEBI:15378"/>
        <dbReference type="ChEBI" id="CHEBI:67139"/>
        <dbReference type="ChEBI" id="CHEBI:537519"/>
        <dbReference type="EC" id="4.3.3.7"/>
    </reaction>
</comment>
<comment type="pathway">
    <text evidence="1">Amino-acid biosynthesis; L-lysine biosynthesis via DAP pathway; (S)-tetrahydrodipicolinate from L-aspartate: step 3/4.</text>
</comment>
<comment type="subunit">
    <text evidence="1">Homotetramer; dimer of dimers.</text>
</comment>
<comment type="subcellular location">
    <subcellularLocation>
        <location evidence="1">Cytoplasm</location>
    </subcellularLocation>
</comment>
<comment type="similarity">
    <text evidence="1">Belongs to the DapA family.</text>
</comment>
<comment type="caution">
    <text evidence="2">Was originally thought to be a dihydrodipicolinate synthase (DHDPS), catalyzing the condensation of (S)-aspartate-beta-semialdehyde [(S)-ASA] and pyruvate to dihydrodipicolinate (DHDP). However, it was shown in E.coli that the product of the enzymatic reaction is not dihydrodipicolinate but in fact (4S)-4-hydroxy-2,3,4,5-tetrahydro-(2S)-dipicolinic acid (HTPA), and that the consecutive dehydration reaction leading to DHDP is not spontaneous but catalyzed by DapB.</text>
</comment>
<protein>
    <recommendedName>
        <fullName evidence="1">4-hydroxy-tetrahydrodipicolinate synthase</fullName>
        <shortName evidence="1">HTPA synthase</shortName>
        <ecNumber evidence="1">4.3.3.7</ecNumber>
    </recommendedName>
</protein>
<evidence type="ECO:0000255" key="1">
    <source>
        <dbReference type="HAMAP-Rule" id="MF_00418"/>
    </source>
</evidence>
<evidence type="ECO:0000305" key="2"/>